<comment type="function">
    <text evidence="1 2">Mediates influx of magnesium ions (By similarity). Alternates between open and closed states. Activated by low cytoplasmic Mg(2+) levels. Inactive when cytoplasmic Mg(2+) levels are high (By similarity).</text>
</comment>
<comment type="catalytic activity">
    <reaction evidence="1">
        <text>Mg(2+)(in) = Mg(2+)(out)</text>
        <dbReference type="Rhea" id="RHEA:29827"/>
        <dbReference type="ChEBI" id="CHEBI:18420"/>
    </reaction>
</comment>
<comment type="subunit">
    <text evidence="2">Homopentamer. In the absence of Mg(2+), interactions between subunits are weakened, and dimers, trimers and tetramers can be observed in vitro (By similarity).</text>
</comment>
<comment type="subcellular location">
    <subcellularLocation>
        <location evidence="1">Cell inner membrane</location>
        <topology evidence="2">Multi-pass membrane protein</topology>
    </subcellularLocation>
</comment>
<comment type="domain">
    <text evidence="2">The central ion permeation pathway is formed by the first transmembrane domain from each of the five subunits. Mg(2+) binding strengthens interactions between subunits and leads to the formation of a symmetrical homopentamer surrounding a closed ion permeation pathway. Low Mg(2+) concentrations trigger both a conformation change within each subunit and a loosening of the interactions between subunits. This results in an open ion conduction pathway. In addition, this results in a less symmetrical shape of the whole complex.</text>
</comment>
<comment type="similarity">
    <text evidence="4">Belongs to the CorA metal ion transporter (MIT) (TC 1.A.35) family.</text>
</comment>
<gene>
    <name type="primary">corA</name>
    <name type="ordered locus">SBO_3829</name>
</gene>
<name>CORA_SHIBS</name>
<protein>
    <recommendedName>
        <fullName>Magnesium transport protein CorA</fullName>
    </recommendedName>
</protein>
<feature type="chain" id="PRO_0000239103" description="Magnesium transport protein CorA">
    <location>
        <begin position="1"/>
        <end position="316"/>
    </location>
</feature>
<feature type="transmembrane region" description="Helical" evidence="3">
    <location>
        <begin position="258"/>
        <end position="278"/>
    </location>
</feature>
<feature type="transmembrane region" description="Helical" evidence="3">
    <location>
        <begin position="290"/>
        <end position="310"/>
    </location>
</feature>
<feature type="short sequence motif" description="Probable selectivity filter" evidence="2">
    <location>
        <begin position="277"/>
        <end position="279"/>
    </location>
</feature>
<feature type="site" description="Essential for ion permeation" evidence="2">
    <location>
        <position position="253"/>
    </location>
</feature>
<keyword id="KW-0997">Cell inner membrane</keyword>
<keyword id="KW-1003">Cell membrane</keyword>
<keyword id="KW-0406">Ion transport</keyword>
<keyword id="KW-0460">Magnesium</keyword>
<keyword id="KW-0472">Membrane</keyword>
<keyword id="KW-0812">Transmembrane</keyword>
<keyword id="KW-1133">Transmembrane helix</keyword>
<keyword id="KW-0813">Transport</keyword>
<dbReference type="EMBL" id="CP000036">
    <property type="protein sequence ID" value="ABB68287.1"/>
    <property type="molecule type" value="Genomic_DNA"/>
</dbReference>
<dbReference type="RefSeq" id="WP_000947159.1">
    <property type="nucleotide sequence ID" value="NC_007613.1"/>
</dbReference>
<dbReference type="SMR" id="Q31UH1"/>
<dbReference type="GeneID" id="93778125"/>
<dbReference type="KEGG" id="sbo:SBO_3829"/>
<dbReference type="HOGENOM" id="CLU_007127_5_0_6"/>
<dbReference type="Proteomes" id="UP000007067">
    <property type="component" value="Chromosome"/>
</dbReference>
<dbReference type="GO" id="GO:0005886">
    <property type="term" value="C:plasma membrane"/>
    <property type="evidence" value="ECO:0007669"/>
    <property type="project" value="UniProtKB-SubCell"/>
</dbReference>
<dbReference type="GO" id="GO:0015087">
    <property type="term" value="F:cobalt ion transmembrane transporter activity"/>
    <property type="evidence" value="ECO:0007669"/>
    <property type="project" value="InterPro"/>
</dbReference>
<dbReference type="GO" id="GO:0015095">
    <property type="term" value="F:magnesium ion transmembrane transporter activity"/>
    <property type="evidence" value="ECO:0007669"/>
    <property type="project" value="InterPro"/>
</dbReference>
<dbReference type="GO" id="GO:0015099">
    <property type="term" value="F:nickel cation transmembrane transporter activity"/>
    <property type="evidence" value="ECO:0007669"/>
    <property type="project" value="TreeGrafter"/>
</dbReference>
<dbReference type="CDD" id="cd12835">
    <property type="entry name" value="EcCorA-like_1"/>
    <property type="match status" value="1"/>
</dbReference>
<dbReference type="FunFam" id="1.20.58.340:FF:000001">
    <property type="entry name" value="Magnesium transport protein CorA"/>
    <property type="match status" value="1"/>
</dbReference>
<dbReference type="Gene3D" id="1.20.58.340">
    <property type="entry name" value="Magnesium transport protein CorA, transmembrane region"/>
    <property type="match status" value="1"/>
</dbReference>
<dbReference type="InterPro" id="IPR045861">
    <property type="entry name" value="CorA_cytoplasmic_dom"/>
</dbReference>
<dbReference type="InterPro" id="IPR050829">
    <property type="entry name" value="CorA_MIT"/>
</dbReference>
<dbReference type="InterPro" id="IPR045863">
    <property type="entry name" value="CorA_TM1_TM2"/>
</dbReference>
<dbReference type="InterPro" id="IPR004488">
    <property type="entry name" value="Mg/Co-transport_prot_CorA"/>
</dbReference>
<dbReference type="InterPro" id="IPR002523">
    <property type="entry name" value="MgTranspt_CorA/ZnTranspt_ZntB"/>
</dbReference>
<dbReference type="NCBIfam" id="TIGR00383">
    <property type="entry name" value="corA"/>
    <property type="match status" value="1"/>
</dbReference>
<dbReference type="PANTHER" id="PTHR47685">
    <property type="entry name" value="MAGNESIUM TRANSPORT PROTEIN CORA"/>
    <property type="match status" value="1"/>
</dbReference>
<dbReference type="PANTHER" id="PTHR47685:SF1">
    <property type="entry name" value="MAGNESIUM TRANSPORT PROTEIN CORA"/>
    <property type="match status" value="1"/>
</dbReference>
<dbReference type="Pfam" id="PF01544">
    <property type="entry name" value="CorA"/>
    <property type="match status" value="1"/>
</dbReference>
<dbReference type="SUPFAM" id="SSF143865">
    <property type="entry name" value="CorA soluble domain-like"/>
    <property type="match status" value="1"/>
</dbReference>
<dbReference type="SUPFAM" id="SSF144083">
    <property type="entry name" value="Magnesium transport protein CorA, transmembrane region"/>
    <property type="match status" value="1"/>
</dbReference>
<organism>
    <name type="scientific">Shigella boydii serotype 4 (strain Sb227)</name>
    <dbReference type="NCBI Taxonomy" id="300268"/>
    <lineage>
        <taxon>Bacteria</taxon>
        <taxon>Pseudomonadati</taxon>
        <taxon>Pseudomonadota</taxon>
        <taxon>Gammaproteobacteria</taxon>
        <taxon>Enterobacterales</taxon>
        <taxon>Enterobacteriaceae</taxon>
        <taxon>Shigella</taxon>
    </lineage>
</organism>
<sequence>MLSAFQLENNRLTRLEVEESQPLVNAVWIDLVEPDDDERLRVQSELGQSLATRPELEDIEASARFFEDDDGLHIHSFFFFEDAEDHAGNSTVAFTIRDGRLFTLRERELPAFRLYRMRARSQSMVDGNAYELLLDLFETKIEQLADEIENIYSDLEQLSRVIMEGHQGDEYDEALSTLAELEDIGWKVRLCLMDTQRALNFLVRKARLPGGQLEQAREILRDIESLLPHNESLFQKVNFLMQAAMGFINIEQNRIIKIFSVVSVVFLPPTLVASSYGMNFEFMPELKWSFGYPGAIIFMILAGLAPYLYFKRKNWL</sequence>
<reference key="1">
    <citation type="journal article" date="2005" name="Nucleic Acids Res.">
        <title>Genome dynamics and diversity of Shigella species, the etiologic agents of bacillary dysentery.</title>
        <authorList>
            <person name="Yang F."/>
            <person name="Yang J."/>
            <person name="Zhang X."/>
            <person name="Chen L."/>
            <person name="Jiang Y."/>
            <person name="Yan Y."/>
            <person name="Tang X."/>
            <person name="Wang J."/>
            <person name="Xiong Z."/>
            <person name="Dong J."/>
            <person name="Xue Y."/>
            <person name="Zhu Y."/>
            <person name="Xu X."/>
            <person name="Sun L."/>
            <person name="Chen S."/>
            <person name="Nie H."/>
            <person name="Peng J."/>
            <person name="Xu J."/>
            <person name="Wang Y."/>
            <person name="Yuan Z."/>
            <person name="Wen Y."/>
            <person name="Yao Z."/>
            <person name="Shen Y."/>
            <person name="Qiang B."/>
            <person name="Hou Y."/>
            <person name="Yu J."/>
            <person name="Jin Q."/>
        </authorList>
    </citation>
    <scope>NUCLEOTIDE SEQUENCE [LARGE SCALE GENOMIC DNA]</scope>
    <source>
        <strain>Sb227</strain>
    </source>
</reference>
<accession>Q31UH1</accession>
<proteinExistence type="inferred from homology"/>
<evidence type="ECO:0000250" key="1">
    <source>
        <dbReference type="UniProtKB" id="P0ABI4"/>
    </source>
</evidence>
<evidence type="ECO:0000250" key="2">
    <source>
        <dbReference type="UniProtKB" id="Q9WZ31"/>
    </source>
</evidence>
<evidence type="ECO:0000255" key="3"/>
<evidence type="ECO:0000305" key="4"/>